<gene>
    <name evidence="1" type="primary">aspS</name>
    <name type="ordered locus">GWCH70_2506</name>
</gene>
<sequence>MFGRTYYCGEITEKAIGEKVVLKGWVQKRRDLGGLIFIDLRDRTGIVQVVFSPEVSKEALNVAEKVRNEYVLSVEGTVVAREEGTINPNLPTGKIEIQAERITIINEAKTPPFVITDQTDVAEEVRLKYRYLDLRRPVMFRTLQLRHRVTKAIRDFLDGEGFLEVETPILTKSTPEGARDYLVPSRVHPGEFYALPQSPQIFKQLLMVAGFERYYQIARCFRDEDLRADRQPEFTQIDIETSFMSQEEIMQLTERMMAYVMKMAKGIDISLPFPRMSYDEAISRYGSDKPDTRFGLELVDVSEIVKNSSFKVFAGAIANGGQVKAINVKGAADQYSRKDIDALAEFVARYGAKGLAWLKVEEDGLKGPIAKFFTEEEQNGLIRTLEAEAGDLLLFVADHKTVVANALGALRVKLGKDLNLIDETKFNFLWITDWPLLEYDEEDGRYYAAHHPFTMPVREDLPQLETNPEKVRAQAYDLVLNGYELGGGSMRIFEREVQEKMFRALGFTEEEARKQFGFLLEAFEYGTPPHGGIALGLDRLVMLLAGRTNLRDTIAFPKTASASCLLTEAPSPVSEQQLEELHLVVNSEKKSEQY</sequence>
<dbReference type="EC" id="6.1.1.23" evidence="1"/>
<dbReference type="EMBL" id="CP001638">
    <property type="protein sequence ID" value="ACS25201.1"/>
    <property type="molecule type" value="Genomic_DNA"/>
</dbReference>
<dbReference type="SMR" id="C5D509"/>
<dbReference type="STRING" id="471223.GWCH70_2506"/>
<dbReference type="KEGG" id="gwc:GWCH70_2506"/>
<dbReference type="eggNOG" id="COG0173">
    <property type="taxonomic scope" value="Bacteria"/>
</dbReference>
<dbReference type="HOGENOM" id="CLU_014330_3_2_9"/>
<dbReference type="OrthoDB" id="9802326at2"/>
<dbReference type="GO" id="GO:0005737">
    <property type="term" value="C:cytoplasm"/>
    <property type="evidence" value="ECO:0007669"/>
    <property type="project" value="UniProtKB-SubCell"/>
</dbReference>
<dbReference type="GO" id="GO:0004815">
    <property type="term" value="F:aspartate-tRNA ligase activity"/>
    <property type="evidence" value="ECO:0007669"/>
    <property type="project" value="UniProtKB-UniRule"/>
</dbReference>
<dbReference type="GO" id="GO:0050560">
    <property type="term" value="F:aspartate-tRNA(Asn) ligase activity"/>
    <property type="evidence" value="ECO:0007669"/>
    <property type="project" value="UniProtKB-EC"/>
</dbReference>
<dbReference type="GO" id="GO:0005524">
    <property type="term" value="F:ATP binding"/>
    <property type="evidence" value="ECO:0007669"/>
    <property type="project" value="UniProtKB-UniRule"/>
</dbReference>
<dbReference type="GO" id="GO:0140096">
    <property type="term" value="F:catalytic activity, acting on a protein"/>
    <property type="evidence" value="ECO:0007669"/>
    <property type="project" value="UniProtKB-ARBA"/>
</dbReference>
<dbReference type="GO" id="GO:0003676">
    <property type="term" value="F:nucleic acid binding"/>
    <property type="evidence" value="ECO:0007669"/>
    <property type="project" value="InterPro"/>
</dbReference>
<dbReference type="GO" id="GO:0016740">
    <property type="term" value="F:transferase activity"/>
    <property type="evidence" value="ECO:0007669"/>
    <property type="project" value="UniProtKB-ARBA"/>
</dbReference>
<dbReference type="GO" id="GO:0006422">
    <property type="term" value="P:aspartyl-tRNA aminoacylation"/>
    <property type="evidence" value="ECO:0007669"/>
    <property type="project" value="UniProtKB-UniRule"/>
</dbReference>
<dbReference type="CDD" id="cd00777">
    <property type="entry name" value="AspRS_core"/>
    <property type="match status" value="1"/>
</dbReference>
<dbReference type="CDD" id="cd04317">
    <property type="entry name" value="EcAspRS_like_N"/>
    <property type="match status" value="1"/>
</dbReference>
<dbReference type="Gene3D" id="3.30.930.10">
    <property type="entry name" value="Bira Bifunctional Protein, Domain 2"/>
    <property type="match status" value="1"/>
</dbReference>
<dbReference type="Gene3D" id="3.30.1360.30">
    <property type="entry name" value="GAD-like domain"/>
    <property type="match status" value="1"/>
</dbReference>
<dbReference type="Gene3D" id="2.40.50.140">
    <property type="entry name" value="Nucleic acid-binding proteins"/>
    <property type="match status" value="1"/>
</dbReference>
<dbReference type="HAMAP" id="MF_00044">
    <property type="entry name" value="Asp_tRNA_synth_type1"/>
    <property type="match status" value="1"/>
</dbReference>
<dbReference type="InterPro" id="IPR004364">
    <property type="entry name" value="Aa-tRNA-synt_II"/>
</dbReference>
<dbReference type="InterPro" id="IPR006195">
    <property type="entry name" value="aa-tRNA-synth_II"/>
</dbReference>
<dbReference type="InterPro" id="IPR045864">
    <property type="entry name" value="aa-tRNA-synth_II/BPL/LPL"/>
</dbReference>
<dbReference type="InterPro" id="IPR004524">
    <property type="entry name" value="Asp-tRNA-ligase_1"/>
</dbReference>
<dbReference type="InterPro" id="IPR047089">
    <property type="entry name" value="Asp-tRNA-ligase_1_N"/>
</dbReference>
<dbReference type="InterPro" id="IPR002312">
    <property type="entry name" value="Asp/Asn-tRNA-synth_IIb"/>
</dbReference>
<dbReference type="InterPro" id="IPR047090">
    <property type="entry name" value="AspRS_core"/>
</dbReference>
<dbReference type="InterPro" id="IPR004115">
    <property type="entry name" value="GAD-like_sf"/>
</dbReference>
<dbReference type="InterPro" id="IPR029351">
    <property type="entry name" value="GAD_dom"/>
</dbReference>
<dbReference type="InterPro" id="IPR012340">
    <property type="entry name" value="NA-bd_OB-fold"/>
</dbReference>
<dbReference type="InterPro" id="IPR004365">
    <property type="entry name" value="NA-bd_OB_tRNA"/>
</dbReference>
<dbReference type="NCBIfam" id="TIGR00459">
    <property type="entry name" value="aspS_bact"/>
    <property type="match status" value="1"/>
</dbReference>
<dbReference type="NCBIfam" id="NF001750">
    <property type="entry name" value="PRK00476.1"/>
    <property type="match status" value="1"/>
</dbReference>
<dbReference type="PANTHER" id="PTHR22594:SF5">
    <property type="entry name" value="ASPARTATE--TRNA LIGASE, MITOCHONDRIAL"/>
    <property type="match status" value="1"/>
</dbReference>
<dbReference type="PANTHER" id="PTHR22594">
    <property type="entry name" value="ASPARTYL/LYSYL-TRNA SYNTHETASE"/>
    <property type="match status" value="1"/>
</dbReference>
<dbReference type="Pfam" id="PF02938">
    <property type="entry name" value="GAD"/>
    <property type="match status" value="1"/>
</dbReference>
<dbReference type="Pfam" id="PF00152">
    <property type="entry name" value="tRNA-synt_2"/>
    <property type="match status" value="1"/>
</dbReference>
<dbReference type="Pfam" id="PF01336">
    <property type="entry name" value="tRNA_anti-codon"/>
    <property type="match status" value="1"/>
</dbReference>
<dbReference type="PRINTS" id="PR01042">
    <property type="entry name" value="TRNASYNTHASP"/>
</dbReference>
<dbReference type="SUPFAM" id="SSF55681">
    <property type="entry name" value="Class II aaRS and biotin synthetases"/>
    <property type="match status" value="1"/>
</dbReference>
<dbReference type="SUPFAM" id="SSF55261">
    <property type="entry name" value="GAD domain-like"/>
    <property type="match status" value="1"/>
</dbReference>
<dbReference type="SUPFAM" id="SSF50249">
    <property type="entry name" value="Nucleic acid-binding proteins"/>
    <property type="match status" value="1"/>
</dbReference>
<dbReference type="PROSITE" id="PS50862">
    <property type="entry name" value="AA_TRNA_LIGASE_II"/>
    <property type="match status" value="1"/>
</dbReference>
<organism>
    <name type="scientific">Geobacillus sp. (strain WCH70)</name>
    <dbReference type="NCBI Taxonomy" id="471223"/>
    <lineage>
        <taxon>Bacteria</taxon>
        <taxon>Bacillati</taxon>
        <taxon>Bacillota</taxon>
        <taxon>Bacilli</taxon>
        <taxon>Bacillales</taxon>
        <taxon>Anoxybacillaceae</taxon>
        <taxon>Geobacillus</taxon>
    </lineage>
</organism>
<keyword id="KW-0030">Aminoacyl-tRNA synthetase</keyword>
<keyword id="KW-0067">ATP-binding</keyword>
<keyword id="KW-0963">Cytoplasm</keyword>
<keyword id="KW-0436">Ligase</keyword>
<keyword id="KW-0547">Nucleotide-binding</keyword>
<keyword id="KW-0648">Protein biosynthesis</keyword>
<evidence type="ECO:0000255" key="1">
    <source>
        <dbReference type="HAMAP-Rule" id="MF_00044"/>
    </source>
</evidence>
<name>SYDND_GEOSW</name>
<feature type="chain" id="PRO_1000202160" description="Aspartate--tRNA(Asp/Asn) ligase">
    <location>
        <begin position="1"/>
        <end position="594"/>
    </location>
</feature>
<feature type="region of interest" description="Aspartate" evidence="1">
    <location>
        <begin position="200"/>
        <end position="203"/>
    </location>
</feature>
<feature type="binding site" evidence="1">
    <location>
        <position position="176"/>
    </location>
    <ligand>
        <name>L-aspartate</name>
        <dbReference type="ChEBI" id="CHEBI:29991"/>
    </ligand>
</feature>
<feature type="binding site" evidence="1">
    <location>
        <begin position="222"/>
        <end position="224"/>
    </location>
    <ligand>
        <name>ATP</name>
        <dbReference type="ChEBI" id="CHEBI:30616"/>
    </ligand>
</feature>
<feature type="binding site" evidence="1">
    <location>
        <position position="222"/>
    </location>
    <ligand>
        <name>L-aspartate</name>
        <dbReference type="ChEBI" id="CHEBI:29991"/>
    </ligand>
</feature>
<feature type="binding site" evidence="1">
    <location>
        <position position="231"/>
    </location>
    <ligand>
        <name>ATP</name>
        <dbReference type="ChEBI" id="CHEBI:30616"/>
    </ligand>
</feature>
<feature type="binding site" evidence="1">
    <location>
        <position position="450"/>
    </location>
    <ligand>
        <name>L-aspartate</name>
        <dbReference type="ChEBI" id="CHEBI:29991"/>
    </ligand>
</feature>
<feature type="binding site" evidence="1">
    <location>
        <position position="484"/>
    </location>
    <ligand>
        <name>ATP</name>
        <dbReference type="ChEBI" id="CHEBI:30616"/>
    </ligand>
</feature>
<feature type="binding site" evidence="1">
    <location>
        <position position="491"/>
    </location>
    <ligand>
        <name>L-aspartate</name>
        <dbReference type="ChEBI" id="CHEBI:29991"/>
    </ligand>
</feature>
<feature type="binding site" evidence="1">
    <location>
        <begin position="536"/>
        <end position="539"/>
    </location>
    <ligand>
        <name>ATP</name>
        <dbReference type="ChEBI" id="CHEBI:30616"/>
    </ligand>
</feature>
<feature type="site" description="Important for tRNA non-discrimination" evidence="1">
    <location>
        <position position="84"/>
    </location>
</feature>
<proteinExistence type="inferred from homology"/>
<accession>C5D509</accession>
<protein>
    <recommendedName>
        <fullName evidence="1">Aspartate--tRNA(Asp/Asn) ligase</fullName>
        <ecNumber evidence="1">6.1.1.23</ecNumber>
    </recommendedName>
    <alternativeName>
        <fullName evidence="1">Aspartyl-tRNA synthetase</fullName>
        <shortName evidence="1">AspRS</shortName>
    </alternativeName>
    <alternativeName>
        <fullName evidence="1">Non-discriminating aspartyl-tRNA synthetase</fullName>
        <shortName evidence="1">ND-AspRS</shortName>
    </alternativeName>
</protein>
<comment type="function">
    <text evidence="1">Aspartyl-tRNA synthetase with relaxed tRNA specificity since it is able to aspartylate not only its cognate tRNA(Asp) but also tRNA(Asn). Reaction proceeds in two steps: L-aspartate is first activated by ATP to form Asp-AMP and then transferred to the acceptor end of tRNA(Asp/Asn).</text>
</comment>
<comment type="catalytic activity">
    <reaction evidence="1">
        <text>tRNA(Asx) + L-aspartate + ATP = L-aspartyl-tRNA(Asx) + AMP + diphosphate</text>
        <dbReference type="Rhea" id="RHEA:18349"/>
        <dbReference type="Rhea" id="RHEA-COMP:9710"/>
        <dbReference type="Rhea" id="RHEA-COMP:9711"/>
        <dbReference type="ChEBI" id="CHEBI:29991"/>
        <dbReference type="ChEBI" id="CHEBI:30616"/>
        <dbReference type="ChEBI" id="CHEBI:33019"/>
        <dbReference type="ChEBI" id="CHEBI:78442"/>
        <dbReference type="ChEBI" id="CHEBI:78516"/>
        <dbReference type="ChEBI" id="CHEBI:456215"/>
        <dbReference type="EC" id="6.1.1.23"/>
    </reaction>
</comment>
<comment type="subunit">
    <text evidence="1">Homodimer.</text>
</comment>
<comment type="subcellular location">
    <subcellularLocation>
        <location evidence="1">Cytoplasm</location>
    </subcellularLocation>
</comment>
<comment type="similarity">
    <text evidence="1">Belongs to the class-II aminoacyl-tRNA synthetase family. Type 1 subfamily.</text>
</comment>
<reference key="1">
    <citation type="submission" date="2009-06" db="EMBL/GenBank/DDBJ databases">
        <title>Complete sequence of chromosome of Geopacillus sp. WCH70.</title>
        <authorList>
            <consortium name="US DOE Joint Genome Institute"/>
            <person name="Lucas S."/>
            <person name="Copeland A."/>
            <person name="Lapidus A."/>
            <person name="Glavina del Rio T."/>
            <person name="Dalin E."/>
            <person name="Tice H."/>
            <person name="Bruce D."/>
            <person name="Goodwin L."/>
            <person name="Pitluck S."/>
            <person name="Chertkov O."/>
            <person name="Brettin T."/>
            <person name="Detter J.C."/>
            <person name="Han C."/>
            <person name="Larimer F."/>
            <person name="Land M."/>
            <person name="Hauser L."/>
            <person name="Kyrpides N."/>
            <person name="Mikhailova N."/>
            <person name="Brumm P."/>
            <person name="Mead D.A."/>
            <person name="Richardson P."/>
        </authorList>
    </citation>
    <scope>NUCLEOTIDE SEQUENCE [LARGE SCALE GENOMIC DNA]</scope>
    <source>
        <strain>WCH70</strain>
    </source>
</reference>